<organism>
    <name type="scientific">Bacillus subtilis (strain 168)</name>
    <dbReference type="NCBI Taxonomy" id="224308"/>
    <lineage>
        <taxon>Bacteria</taxon>
        <taxon>Bacillati</taxon>
        <taxon>Bacillota</taxon>
        <taxon>Bacilli</taxon>
        <taxon>Bacillales</taxon>
        <taxon>Bacillaceae</taxon>
        <taxon>Bacillus</taxon>
    </lineage>
</organism>
<sequence length="183" mass="21146">MPDIRPHYFIGVPIPEGIANPIYQAAKNEPILTFQKWVHPLDYHITLIFLGAADETQIKKLEGSLAEIASEIDPFSIKFGKIDVFGDRRKPRVLHLEPKKNKTLDRLREHTKQAVLQAGFQVEKRPYHPHMTLARKWTGEDGFPAHVPFESGEVSMMAERFSLFQIHLNQSPKYEEIFKFQLS</sequence>
<gene>
    <name type="primary">ytlP</name>
    <name type="ordered locus">BSU29960</name>
</gene>
<protein>
    <recommendedName>
        <fullName evidence="1">RNA 2',3'-cyclic phosphodiesterase</fullName>
        <shortName evidence="1">RNA 2',3'-CPDase</shortName>
        <ecNumber evidence="1">3.1.4.58</ecNumber>
    </recommendedName>
</protein>
<evidence type="ECO:0000255" key="1">
    <source>
        <dbReference type="HAMAP-Rule" id="MF_01940"/>
    </source>
</evidence>
<feature type="chain" id="PRO_0000138968" description="RNA 2',3'-cyclic phosphodiesterase">
    <location>
        <begin position="1"/>
        <end position="183"/>
    </location>
</feature>
<feature type="short sequence motif" description="HXTX 1" evidence="1">
    <location>
        <begin position="44"/>
        <end position="47"/>
    </location>
</feature>
<feature type="short sequence motif" description="HXTX 2" evidence="1">
    <location>
        <begin position="130"/>
        <end position="133"/>
    </location>
</feature>
<feature type="active site" description="Proton donor" evidence="1">
    <location>
        <position position="44"/>
    </location>
</feature>
<feature type="active site" description="Proton acceptor" evidence="1">
    <location>
        <position position="130"/>
    </location>
</feature>
<accession>O34570</accession>
<reference key="1">
    <citation type="journal article" date="1997" name="Microbiology">
        <title>Sequencing and functional annotation of the Bacillus subtilis genes in the 200 kb rrnB-dnaB region.</title>
        <authorList>
            <person name="Lapidus A."/>
            <person name="Galleron N."/>
            <person name="Sorokin A."/>
            <person name="Ehrlich S.D."/>
        </authorList>
    </citation>
    <scope>NUCLEOTIDE SEQUENCE [GENOMIC DNA]</scope>
    <source>
        <strain>168</strain>
    </source>
</reference>
<reference key="2">
    <citation type="journal article" date="1997" name="Nature">
        <title>The complete genome sequence of the Gram-positive bacterium Bacillus subtilis.</title>
        <authorList>
            <person name="Kunst F."/>
            <person name="Ogasawara N."/>
            <person name="Moszer I."/>
            <person name="Albertini A.M."/>
            <person name="Alloni G."/>
            <person name="Azevedo V."/>
            <person name="Bertero M.G."/>
            <person name="Bessieres P."/>
            <person name="Bolotin A."/>
            <person name="Borchert S."/>
            <person name="Borriss R."/>
            <person name="Boursier L."/>
            <person name="Brans A."/>
            <person name="Braun M."/>
            <person name="Brignell S.C."/>
            <person name="Bron S."/>
            <person name="Brouillet S."/>
            <person name="Bruschi C.V."/>
            <person name="Caldwell B."/>
            <person name="Capuano V."/>
            <person name="Carter N.M."/>
            <person name="Choi S.-K."/>
            <person name="Codani J.-J."/>
            <person name="Connerton I.F."/>
            <person name="Cummings N.J."/>
            <person name="Daniel R.A."/>
            <person name="Denizot F."/>
            <person name="Devine K.M."/>
            <person name="Duesterhoeft A."/>
            <person name="Ehrlich S.D."/>
            <person name="Emmerson P.T."/>
            <person name="Entian K.-D."/>
            <person name="Errington J."/>
            <person name="Fabret C."/>
            <person name="Ferrari E."/>
            <person name="Foulger D."/>
            <person name="Fritz C."/>
            <person name="Fujita M."/>
            <person name="Fujita Y."/>
            <person name="Fuma S."/>
            <person name="Galizzi A."/>
            <person name="Galleron N."/>
            <person name="Ghim S.-Y."/>
            <person name="Glaser P."/>
            <person name="Goffeau A."/>
            <person name="Golightly E.J."/>
            <person name="Grandi G."/>
            <person name="Guiseppi G."/>
            <person name="Guy B.J."/>
            <person name="Haga K."/>
            <person name="Haiech J."/>
            <person name="Harwood C.R."/>
            <person name="Henaut A."/>
            <person name="Hilbert H."/>
            <person name="Holsappel S."/>
            <person name="Hosono S."/>
            <person name="Hullo M.-F."/>
            <person name="Itaya M."/>
            <person name="Jones L.-M."/>
            <person name="Joris B."/>
            <person name="Karamata D."/>
            <person name="Kasahara Y."/>
            <person name="Klaerr-Blanchard M."/>
            <person name="Klein C."/>
            <person name="Kobayashi Y."/>
            <person name="Koetter P."/>
            <person name="Koningstein G."/>
            <person name="Krogh S."/>
            <person name="Kumano M."/>
            <person name="Kurita K."/>
            <person name="Lapidus A."/>
            <person name="Lardinois S."/>
            <person name="Lauber J."/>
            <person name="Lazarevic V."/>
            <person name="Lee S.-M."/>
            <person name="Levine A."/>
            <person name="Liu H."/>
            <person name="Masuda S."/>
            <person name="Mauel C."/>
            <person name="Medigue C."/>
            <person name="Medina N."/>
            <person name="Mellado R.P."/>
            <person name="Mizuno M."/>
            <person name="Moestl D."/>
            <person name="Nakai S."/>
            <person name="Noback M."/>
            <person name="Noone D."/>
            <person name="O'Reilly M."/>
            <person name="Ogawa K."/>
            <person name="Ogiwara A."/>
            <person name="Oudega B."/>
            <person name="Park S.-H."/>
            <person name="Parro V."/>
            <person name="Pohl T.M."/>
            <person name="Portetelle D."/>
            <person name="Porwollik S."/>
            <person name="Prescott A.M."/>
            <person name="Presecan E."/>
            <person name="Pujic P."/>
            <person name="Purnelle B."/>
            <person name="Rapoport G."/>
            <person name="Rey M."/>
            <person name="Reynolds S."/>
            <person name="Rieger M."/>
            <person name="Rivolta C."/>
            <person name="Rocha E."/>
            <person name="Roche B."/>
            <person name="Rose M."/>
            <person name="Sadaie Y."/>
            <person name="Sato T."/>
            <person name="Scanlan E."/>
            <person name="Schleich S."/>
            <person name="Schroeter R."/>
            <person name="Scoffone F."/>
            <person name="Sekiguchi J."/>
            <person name="Sekowska A."/>
            <person name="Seror S.J."/>
            <person name="Serror P."/>
            <person name="Shin B.-S."/>
            <person name="Soldo B."/>
            <person name="Sorokin A."/>
            <person name="Tacconi E."/>
            <person name="Takagi T."/>
            <person name="Takahashi H."/>
            <person name="Takemaru K."/>
            <person name="Takeuchi M."/>
            <person name="Tamakoshi A."/>
            <person name="Tanaka T."/>
            <person name="Terpstra P."/>
            <person name="Tognoni A."/>
            <person name="Tosato V."/>
            <person name="Uchiyama S."/>
            <person name="Vandenbol M."/>
            <person name="Vannier F."/>
            <person name="Vassarotti A."/>
            <person name="Viari A."/>
            <person name="Wambutt R."/>
            <person name="Wedler E."/>
            <person name="Wedler H."/>
            <person name="Weitzenegger T."/>
            <person name="Winters P."/>
            <person name="Wipat A."/>
            <person name="Yamamoto H."/>
            <person name="Yamane K."/>
            <person name="Yasumoto K."/>
            <person name="Yata K."/>
            <person name="Yoshida K."/>
            <person name="Yoshikawa H.-F."/>
            <person name="Zumstein E."/>
            <person name="Yoshikawa H."/>
            <person name="Danchin A."/>
        </authorList>
    </citation>
    <scope>NUCLEOTIDE SEQUENCE [LARGE SCALE GENOMIC DNA]</scope>
    <source>
        <strain>168</strain>
    </source>
</reference>
<reference key="3">
    <citation type="journal article" date="2006" name="Acta Crystallogr. F">
        <title>Preparation, crystallization and preliminary X-ray analysis of protein YtlP from Bacillus subtilis.</title>
        <authorList>
            <person name="Liu C."/>
            <person name="Li D."/>
            <person name="Hederstedt L."/>
            <person name="Li L."/>
            <person name="Liang Y.H."/>
            <person name="Su X.D."/>
        </authorList>
    </citation>
    <scope>CRYSTALLIZATION</scope>
</reference>
<name>THPR_BACSU</name>
<proteinExistence type="evidence at protein level"/>
<keyword id="KW-0378">Hydrolase</keyword>
<keyword id="KW-1185">Reference proteome</keyword>
<comment type="function">
    <text evidence="1">Hydrolyzes RNA 2',3'-cyclic phosphodiester to an RNA 2'-phosphomonoester.</text>
</comment>
<comment type="catalytic activity">
    <reaction evidence="1">
        <text>a 3'-end 2',3'-cyclophospho-ribonucleotide-RNA + H2O = a 3'-end 2'-phospho-ribonucleotide-RNA + H(+)</text>
        <dbReference type="Rhea" id="RHEA:11828"/>
        <dbReference type="Rhea" id="RHEA-COMP:10464"/>
        <dbReference type="Rhea" id="RHEA-COMP:17353"/>
        <dbReference type="ChEBI" id="CHEBI:15377"/>
        <dbReference type="ChEBI" id="CHEBI:15378"/>
        <dbReference type="ChEBI" id="CHEBI:83064"/>
        <dbReference type="ChEBI" id="CHEBI:173113"/>
        <dbReference type="EC" id="3.1.4.58"/>
    </reaction>
</comment>
<comment type="similarity">
    <text evidence="1">Belongs to the 2H phosphoesterase superfamily. ThpR family.</text>
</comment>
<dbReference type="EC" id="3.1.4.58" evidence="1"/>
<dbReference type="EMBL" id="AF008220">
    <property type="protein sequence ID" value="AAC00280.1"/>
    <property type="molecule type" value="Genomic_DNA"/>
</dbReference>
<dbReference type="EMBL" id="AL009126">
    <property type="protein sequence ID" value="CAB14974.1"/>
    <property type="molecule type" value="Genomic_DNA"/>
</dbReference>
<dbReference type="PIR" id="F69995">
    <property type="entry name" value="F69995"/>
</dbReference>
<dbReference type="RefSeq" id="NP_390874.1">
    <property type="nucleotide sequence ID" value="NC_000964.3"/>
</dbReference>
<dbReference type="SMR" id="O34570"/>
<dbReference type="FunCoup" id="O34570">
    <property type="interactions" value="42"/>
</dbReference>
<dbReference type="STRING" id="224308.BSU29960"/>
<dbReference type="PaxDb" id="224308-BSU29960"/>
<dbReference type="EnsemblBacteria" id="CAB14974">
    <property type="protein sequence ID" value="CAB14974"/>
    <property type="gene ID" value="BSU_29960"/>
</dbReference>
<dbReference type="GeneID" id="937293"/>
<dbReference type="KEGG" id="bsu:BSU29960"/>
<dbReference type="PATRIC" id="fig|224308.179.peg.3254"/>
<dbReference type="eggNOG" id="COG1514">
    <property type="taxonomic scope" value="Bacteria"/>
</dbReference>
<dbReference type="InParanoid" id="O34570"/>
<dbReference type="OrthoDB" id="9789350at2"/>
<dbReference type="PhylomeDB" id="O34570"/>
<dbReference type="BioCyc" id="BSUB:BSU29960-MONOMER"/>
<dbReference type="Proteomes" id="UP000001570">
    <property type="component" value="Chromosome"/>
</dbReference>
<dbReference type="GO" id="GO:0005829">
    <property type="term" value="C:cytosol"/>
    <property type="evidence" value="ECO:0000318"/>
    <property type="project" value="GO_Central"/>
</dbReference>
<dbReference type="GO" id="GO:0004113">
    <property type="term" value="F:2',3'-cyclic-nucleotide 3'-phosphodiesterase activity"/>
    <property type="evidence" value="ECO:0007669"/>
    <property type="project" value="InterPro"/>
</dbReference>
<dbReference type="GO" id="GO:0034237">
    <property type="term" value="F:protein kinase A regulatory subunit binding"/>
    <property type="evidence" value="ECO:0000318"/>
    <property type="project" value="GO_Central"/>
</dbReference>
<dbReference type="GO" id="GO:0008664">
    <property type="term" value="F:RNA 2',3'-cyclic 3'-phosphodiesterase activity"/>
    <property type="evidence" value="ECO:0007669"/>
    <property type="project" value="UniProtKB-EC"/>
</dbReference>
<dbReference type="Gene3D" id="3.90.1140.10">
    <property type="entry name" value="Cyclic phosphodiesterase"/>
    <property type="match status" value="1"/>
</dbReference>
<dbReference type="HAMAP" id="MF_01940">
    <property type="entry name" value="RNA_CPDase"/>
    <property type="match status" value="1"/>
</dbReference>
<dbReference type="InterPro" id="IPR009097">
    <property type="entry name" value="Cyclic_Pdiesterase"/>
</dbReference>
<dbReference type="InterPro" id="IPR004175">
    <property type="entry name" value="RNA_CPDase"/>
</dbReference>
<dbReference type="NCBIfam" id="TIGR02258">
    <property type="entry name" value="2_5_ligase"/>
    <property type="match status" value="1"/>
</dbReference>
<dbReference type="PANTHER" id="PTHR35561">
    <property type="entry name" value="RNA 2',3'-CYCLIC PHOSPHODIESTERASE"/>
    <property type="match status" value="1"/>
</dbReference>
<dbReference type="PANTHER" id="PTHR35561:SF1">
    <property type="entry name" value="RNA 2',3'-CYCLIC PHOSPHODIESTERASE"/>
    <property type="match status" value="1"/>
</dbReference>
<dbReference type="Pfam" id="PF13563">
    <property type="entry name" value="2_5_RNA_ligase2"/>
    <property type="match status" value="1"/>
</dbReference>
<dbReference type="SUPFAM" id="SSF55144">
    <property type="entry name" value="LigT-like"/>
    <property type="match status" value="1"/>
</dbReference>